<evidence type="ECO:0000255" key="1">
    <source>
        <dbReference type="HAMAP-Rule" id="MF_01346"/>
    </source>
</evidence>
<protein>
    <recommendedName>
        <fullName evidence="1">ATP synthase subunit alpha</fullName>
        <ecNumber evidence="1">7.1.2.2</ecNumber>
    </recommendedName>
    <alternativeName>
        <fullName evidence="1">ATP synthase F1 sector subunit alpha</fullName>
    </alternativeName>
    <alternativeName>
        <fullName evidence="1">F-ATPase subunit alpha</fullName>
    </alternativeName>
</protein>
<gene>
    <name evidence="1" type="primary">atpA</name>
    <name type="ordered locus">EF_2610</name>
</gene>
<name>ATPA_ENTFA</name>
<reference key="1">
    <citation type="journal article" date="2003" name="Science">
        <title>Role of mobile DNA in the evolution of vancomycin-resistant Enterococcus faecalis.</title>
        <authorList>
            <person name="Paulsen I.T."/>
            <person name="Banerjei L."/>
            <person name="Myers G.S.A."/>
            <person name="Nelson K.E."/>
            <person name="Seshadri R."/>
            <person name="Read T.D."/>
            <person name="Fouts D.E."/>
            <person name="Eisen J.A."/>
            <person name="Gill S.R."/>
            <person name="Heidelberg J.F."/>
            <person name="Tettelin H."/>
            <person name="Dodson R.J."/>
            <person name="Umayam L.A."/>
            <person name="Brinkac L.M."/>
            <person name="Beanan M.J."/>
            <person name="Daugherty S.C."/>
            <person name="DeBoy R.T."/>
            <person name="Durkin S.A."/>
            <person name="Kolonay J.F."/>
            <person name="Madupu R."/>
            <person name="Nelson W.C."/>
            <person name="Vamathevan J.J."/>
            <person name="Tran B."/>
            <person name="Upton J."/>
            <person name="Hansen T."/>
            <person name="Shetty J."/>
            <person name="Khouri H.M."/>
            <person name="Utterback T.R."/>
            <person name="Radune D."/>
            <person name="Ketchum K.A."/>
            <person name="Dougherty B.A."/>
            <person name="Fraser C.M."/>
        </authorList>
    </citation>
    <scope>NUCLEOTIDE SEQUENCE [LARGE SCALE GENOMIC DNA]</scope>
    <source>
        <strain>ATCC 700802 / V583</strain>
    </source>
</reference>
<sequence>MAIKAEEISALIKEQIENYQQQLAVEEVGTVTYVGDGIARAHGLENAMSGELVEFSNGSYGMAQNLETNDVGIIILGDFETIREGDKVQRTGKIMEVPVGEALIGRVVNPLGQPLDGLGEIKTDKTRPVEATAPGVMQRQSVAEPMQTGLKAIDALVPIGRGQRELVIGDRKTGKTSIAIDTIINQKGQDVICIYVAIGQKESTVRNQVETLRKFGALDYTIVVTAGASQPAPLLYIAPYAGTAMGEEFMYNGKHVLIIFDDLSKQAVAYRELSLLLRRPPGREAYPGDVFYLHSRLLERAAKLSDELGGGSMTALPFVETQAGDISAYIPTNVISITDGQIFLESDLFYAGTRPAVDAGLSVSRVGGSAQIKAMKKVAGTLRLDLASYRELEAFTQFGSDLDAATQAKLNRGRRTVEILKQKLHAPLPVEKQVLILYALTHGFLDSVSVDKILHFEQDLFDYFDGKHADLLETIRTTKDLPDTDALDAAITEFSEMFAAANNSGDSAKEALEKIDNA</sequence>
<keyword id="KW-0066">ATP synthesis</keyword>
<keyword id="KW-0067">ATP-binding</keyword>
<keyword id="KW-1003">Cell membrane</keyword>
<keyword id="KW-0139">CF(1)</keyword>
<keyword id="KW-0375">Hydrogen ion transport</keyword>
<keyword id="KW-0406">Ion transport</keyword>
<keyword id="KW-0472">Membrane</keyword>
<keyword id="KW-0547">Nucleotide-binding</keyword>
<keyword id="KW-1185">Reference proteome</keyword>
<keyword id="KW-1278">Translocase</keyword>
<keyword id="KW-0813">Transport</keyword>
<accession>Q831A3</accession>
<comment type="function">
    <text evidence="1">Produces ATP from ADP in the presence of a proton gradient across the membrane. The alpha chain is a regulatory subunit.</text>
</comment>
<comment type="catalytic activity">
    <reaction evidence="1">
        <text>ATP + H2O + 4 H(+)(in) = ADP + phosphate + 5 H(+)(out)</text>
        <dbReference type="Rhea" id="RHEA:57720"/>
        <dbReference type="ChEBI" id="CHEBI:15377"/>
        <dbReference type="ChEBI" id="CHEBI:15378"/>
        <dbReference type="ChEBI" id="CHEBI:30616"/>
        <dbReference type="ChEBI" id="CHEBI:43474"/>
        <dbReference type="ChEBI" id="CHEBI:456216"/>
        <dbReference type="EC" id="7.1.2.2"/>
    </reaction>
</comment>
<comment type="subunit">
    <text evidence="1">F-type ATPases have 2 components, CF(1) - the catalytic core - and CF(0) - the membrane proton channel. CF(1) has five subunits: alpha(3), beta(3), gamma(1), delta(1), epsilon(1). CF(0) has three main subunits: a(1), b(2) and c(9-12). The alpha and beta chains form an alternating ring which encloses part of the gamma chain. CF(1) is attached to CF(0) by a central stalk formed by the gamma and epsilon chains, while a peripheral stalk is formed by the delta and b chains.</text>
</comment>
<comment type="subcellular location">
    <subcellularLocation>
        <location evidence="1">Cell membrane</location>
        <topology evidence="1">Peripheral membrane protein</topology>
    </subcellularLocation>
</comment>
<comment type="similarity">
    <text evidence="1">Belongs to the ATPase alpha/beta chains family.</text>
</comment>
<organism>
    <name type="scientific">Enterococcus faecalis (strain ATCC 700802 / V583)</name>
    <dbReference type="NCBI Taxonomy" id="226185"/>
    <lineage>
        <taxon>Bacteria</taxon>
        <taxon>Bacillati</taxon>
        <taxon>Bacillota</taxon>
        <taxon>Bacilli</taxon>
        <taxon>Lactobacillales</taxon>
        <taxon>Enterococcaceae</taxon>
        <taxon>Enterococcus</taxon>
    </lineage>
</organism>
<feature type="chain" id="PRO_0000238248" description="ATP synthase subunit alpha">
    <location>
        <begin position="1"/>
        <end position="518"/>
    </location>
</feature>
<feature type="binding site" evidence="1">
    <location>
        <begin position="169"/>
        <end position="176"/>
    </location>
    <ligand>
        <name>ATP</name>
        <dbReference type="ChEBI" id="CHEBI:30616"/>
    </ligand>
</feature>
<feature type="site" description="Required for activity" evidence="1">
    <location>
        <position position="362"/>
    </location>
</feature>
<proteinExistence type="inferred from homology"/>
<dbReference type="EC" id="7.1.2.2" evidence="1"/>
<dbReference type="EMBL" id="AE016830">
    <property type="protein sequence ID" value="AAO82319.1"/>
    <property type="molecule type" value="Genomic_DNA"/>
</dbReference>
<dbReference type="RefSeq" id="NP_816249.1">
    <property type="nucleotide sequence ID" value="NC_004668.1"/>
</dbReference>
<dbReference type="RefSeq" id="WP_002356555.1">
    <property type="nucleotide sequence ID" value="NZ_KE136528.1"/>
</dbReference>
<dbReference type="SMR" id="Q831A3"/>
<dbReference type="STRING" id="226185.EF_2610"/>
<dbReference type="EnsemblBacteria" id="AAO82319">
    <property type="protein sequence ID" value="AAO82319"/>
    <property type="gene ID" value="EF_2610"/>
</dbReference>
<dbReference type="GeneID" id="60894612"/>
<dbReference type="KEGG" id="efa:EF2610"/>
<dbReference type="PATRIC" id="fig|226185.45.peg.946"/>
<dbReference type="eggNOG" id="COG0056">
    <property type="taxonomic scope" value="Bacteria"/>
</dbReference>
<dbReference type="HOGENOM" id="CLU_010091_2_1_9"/>
<dbReference type="Proteomes" id="UP000001415">
    <property type="component" value="Chromosome"/>
</dbReference>
<dbReference type="GO" id="GO:0005886">
    <property type="term" value="C:plasma membrane"/>
    <property type="evidence" value="ECO:0007669"/>
    <property type="project" value="UniProtKB-SubCell"/>
</dbReference>
<dbReference type="GO" id="GO:0045259">
    <property type="term" value="C:proton-transporting ATP synthase complex"/>
    <property type="evidence" value="ECO:0007669"/>
    <property type="project" value="UniProtKB-KW"/>
</dbReference>
<dbReference type="GO" id="GO:0043531">
    <property type="term" value="F:ADP binding"/>
    <property type="evidence" value="ECO:0007669"/>
    <property type="project" value="TreeGrafter"/>
</dbReference>
<dbReference type="GO" id="GO:0005524">
    <property type="term" value="F:ATP binding"/>
    <property type="evidence" value="ECO:0007669"/>
    <property type="project" value="UniProtKB-UniRule"/>
</dbReference>
<dbReference type="GO" id="GO:0046933">
    <property type="term" value="F:proton-transporting ATP synthase activity, rotational mechanism"/>
    <property type="evidence" value="ECO:0007669"/>
    <property type="project" value="UniProtKB-UniRule"/>
</dbReference>
<dbReference type="CDD" id="cd18113">
    <property type="entry name" value="ATP-synt_F1_alpha_C"/>
    <property type="match status" value="1"/>
</dbReference>
<dbReference type="CDD" id="cd18116">
    <property type="entry name" value="ATP-synt_F1_alpha_N"/>
    <property type="match status" value="1"/>
</dbReference>
<dbReference type="CDD" id="cd01132">
    <property type="entry name" value="F1-ATPase_alpha_CD"/>
    <property type="match status" value="1"/>
</dbReference>
<dbReference type="FunFam" id="1.20.150.20:FF:000001">
    <property type="entry name" value="ATP synthase subunit alpha"/>
    <property type="match status" value="1"/>
</dbReference>
<dbReference type="FunFam" id="2.40.30.20:FF:000001">
    <property type="entry name" value="ATP synthase subunit alpha"/>
    <property type="match status" value="1"/>
</dbReference>
<dbReference type="FunFam" id="3.40.50.300:FF:000002">
    <property type="entry name" value="ATP synthase subunit alpha"/>
    <property type="match status" value="1"/>
</dbReference>
<dbReference type="Gene3D" id="2.40.30.20">
    <property type="match status" value="1"/>
</dbReference>
<dbReference type="Gene3D" id="1.20.150.20">
    <property type="entry name" value="ATP synthase alpha/beta chain, C-terminal domain"/>
    <property type="match status" value="1"/>
</dbReference>
<dbReference type="Gene3D" id="3.40.50.300">
    <property type="entry name" value="P-loop containing nucleotide triphosphate hydrolases"/>
    <property type="match status" value="1"/>
</dbReference>
<dbReference type="HAMAP" id="MF_01346">
    <property type="entry name" value="ATP_synth_alpha_bact"/>
    <property type="match status" value="1"/>
</dbReference>
<dbReference type="InterPro" id="IPR023366">
    <property type="entry name" value="ATP_synth_asu-like_sf"/>
</dbReference>
<dbReference type="InterPro" id="IPR000793">
    <property type="entry name" value="ATP_synth_asu_C"/>
</dbReference>
<dbReference type="InterPro" id="IPR038376">
    <property type="entry name" value="ATP_synth_asu_C_sf"/>
</dbReference>
<dbReference type="InterPro" id="IPR033732">
    <property type="entry name" value="ATP_synth_F1_a_nt-bd_dom"/>
</dbReference>
<dbReference type="InterPro" id="IPR005294">
    <property type="entry name" value="ATP_synth_F1_asu"/>
</dbReference>
<dbReference type="InterPro" id="IPR020003">
    <property type="entry name" value="ATPase_a/bsu_AS"/>
</dbReference>
<dbReference type="InterPro" id="IPR004100">
    <property type="entry name" value="ATPase_F1/V1/A1_a/bsu_N"/>
</dbReference>
<dbReference type="InterPro" id="IPR036121">
    <property type="entry name" value="ATPase_F1/V1/A1_a/bsu_N_sf"/>
</dbReference>
<dbReference type="InterPro" id="IPR000194">
    <property type="entry name" value="ATPase_F1/V1/A1_a/bsu_nucl-bd"/>
</dbReference>
<dbReference type="InterPro" id="IPR027417">
    <property type="entry name" value="P-loop_NTPase"/>
</dbReference>
<dbReference type="NCBIfam" id="TIGR00962">
    <property type="entry name" value="atpA"/>
    <property type="match status" value="1"/>
</dbReference>
<dbReference type="NCBIfam" id="NF009884">
    <property type="entry name" value="PRK13343.1"/>
    <property type="match status" value="1"/>
</dbReference>
<dbReference type="PANTHER" id="PTHR48082">
    <property type="entry name" value="ATP SYNTHASE SUBUNIT ALPHA, MITOCHONDRIAL"/>
    <property type="match status" value="1"/>
</dbReference>
<dbReference type="PANTHER" id="PTHR48082:SF2">
    <property type="entry name" value="ATP SYNTHASE SUBUNIT ALPHA, MITOCHONDRIAL"/>
    <property type="match status" value="1"/>
</dbReference>
<dbReference type="Pfam" id="PF00006">
    <property type="entry name" value="ATP-synt_ab"/>
    <property type="match status" value="1"/>
</dbReference>
<dbReference type="Pfam" id="PF00306">
    <property type="entry name" value="ATP-synt_ab_C"/>
    <property type="match status" value="1"/>
</dbReference>
<dbReference type="Pfam" id="PF02874">
    <property type="entry name" value="ATP-synt_ab_N"/>
    <property type="match status" value="1"/>
</dbReference>
<dbReference type="PIRSF" id="PIRSF039088">
    <property type="entry name" value="F_ATPase_subunit_alpha"/>
    <property type="match status" value="1"/>
</dbReference>
<dbReference type="SUPFAM" id="SSF47917">
    <property type="entry name" value="C-terminal domain of alpha and beta subunits of F1 ATP synthase"/>
    <property type="match status" value="1"/>
</dbReference>
<dbReference type="SUPFAM" id="SSF50615">
    <property type="entry name" value="N-terminal domain of alpha and beta subunits of F1 ATP synthase"/>
    <property type="match status" value="1"/>
</dbReference>
<dbReference type="SUPFAM" id="SSF52540">
    <property type="entry name" value="P-loop containing nucleoside triphosphate hydrolases"/>
    <property type="match status" value="1"/>
</dbReference>
<dbReference type="PROSITE" id="PS00152">
    <property type="entry name" value="ATPASE_ALPHA_BETA"/>
    <property type="match status" value="1"/>
</dbReference>